<gene>
    <name type="primary">CDF4</name>
    <name type="synonym">DOF2.3</name>
    <name type="ordered locus">At2g34140</name>
    <name type="ORF">T14G11.26</name>
</gene>
<evidence type="ECO:0000250" key="1"/>
<evidence type="ECO:0000255" key="2">
    <source>
        <dbReference type="PROSITE-ProRule" id="PRU00071"/>
    </source>
</evidence>
<evidence type="ECO:0000256" key="3">
    <source>
        <dbReference type="SAM" id="MobiDB-lite"/>
    </source>
</evidence>
<evidence type="ECO:0000269" key="4">
    <source>
    </source>
</evidence>
<evidence type="ECO:0000305" key="5"/>
<protein>
    <recommendedName>
        <fullName>Cyclic dof factor 4</fullName>
    </recommendedName>
    <alternativeName>
        <fullName>Dof zinc finger protein DOF2.3</fullName>
        <shortName>AtDOF2.3</shortName>
    </alternativeName>
</protein>
<accession>O22967</accession>
<accession>Q56YL4</accession>
<keyword id="KW-0238">DNA-binding</keyword>
<keyword id="KW-0287">Flowering</keyword>
<keyword id="KW-0479">Metal-binding</keyword>
<keyword id="KW-0539">Nucleus</keyword>
<keyword id="KW-1185">Reference proteome</keyword>
<keyword id="KW-0804">Transcription</keyword>
<keyword id="KW-0805">Transcription regulation</keyword>
<keyword id="KW-0862">Zinc</keyword>
<keyword id="KW-0863">Zinc-finger</keyword>
<dbReference type="EMBL" id="AC002341">
    <property type="protein sequence ID" value="AAB67632.1"/>
    <property type="molecule type" value="Genomic_DNA"/>
</dbReference>
<dbReference type="EMBL" id="CP002685">
    <property type="protein sequence ID" value="AEC08923.1"/>
    <property type="molecule type" value="Genomic_DNA"/>
</dbReference>
<dbReference type="EMBL" id="BT010496">
    <property type="protein sequence ID" value="AAQ65119.1"/>
    <property type="molecule type" value="mRNA"/>
</dbReference>
<dbReference type="EMBL" id="AK221308">
    <property type="protein sequence ID" value="BAD94068.1"/>
    <property type="molecule type" value="mRNA"/>
</dbReference>
<dbReference type="PIR" id="H84752">
    <property type="entry name" value="H84752"/>
</dbReference>
<dbReference type="RefSeq" id="NP_180961.1">
    <property type="nucleotide sequence ID" value="NM_128965.5"/>
</dbReference>
<dbReference type="BioGRID" id="3322">
    <property type="interactions" value="12"/>
</dbReference>
<dbReference type="FunCoup" id="O22967">
    <property type="interactions" value="526"/>
</dbReference>
<dbReference type="IntAct" id="O22967">
    <property type="interactions" value="11"/>
</dbReference>
<dbReference type="STRING" id="3702.O22967"/>
<dbReference type="PaxDb" id="3702-AT2G34140.1"/>
<dbReference type="EnsemblPlants" id="AT2G34140.1">
    <property type="protein sequence ID" value="AT2G34140.1"/>
    <property type="gene ID" value="AT2G34140"/>
</dbReference>
<dbReference type="GeneID" id="817975"/>
<dbReference type="Gramene" id="AT2G34140.1">
    <property type="protein sequence ID" value="AT2G34140.1"/>
    <property type="gene ID" value="AT2G34140"/>
</dbReference>
<dbReference type="KEGG" id="ath:AT2G34140"/>
<dbReference type="Araport" id="AT2G34140"/>
<dbReference type="TAIR" id="AT2G34140">
    <property type="gene designation" value="CDF4"/>
</dbReference>
<dbReference type="eggNOG" id="ENOG502RZI1">
    <property type="taxonomic scope" value="Eukaryota"/>
</dbReference>
<dbReference type="HOGENOM" id="CLU_078374_1_0_1"/>
<dbReference type="InParanoid" id="O22967"/>
<dbReference type="OMA" id="MKRLRCY"/>
<dbReference type="PhylomeDB" id="O22967"/>
<dbReference type="PRO" id="PR:O22967"/>
<dbReference type="Proteomes" id="UP000006548">
    <property type="component" value="Chromosome 2"/>
</dbReference>
<dbReference type="ExpressionAtlas" id="O22967">
    <property type="expression patterns" value="baseline and differential"/>
</dbReference>
<dbReference type="GO" id="GO:0005634">
    <property type="term" value="C:nucleus"/>
    <property type="evidence" value="ECO:0007669"/>
    <property type="project" value="UniProtKB-SubCell"/>
</dbReference>
<dbReference type="GO" id="GO:0003700">
    <property type="term" value="F:DNA-binding transcription factor activity"/>
    <property type="evidence" value="ECO:0000250"/>
    <property type="project" value="TAIR"/>
</dbReference>
<dbReference type="GO" id="GO:0000976">
    <property type="term" value="F:transcription cis-regulatory region binding"/>
    <property type="evidence" value="ECO:0000353"/>
    <property type="project" value="TAIR"/>
</dbReference>
<dbReference type="GO" id="GO:0008270">
    <property type="term" value="F:zinc ion binding"/>
    <property type="evidence" value="ECO:0007669"/>
    <property type="project" value="UniProtKB-KW"/>
</dbReference>
<dbReference type="GO" id="GO:0009908">
    <property type="term" value="P:flower development"/>
    <property type="evidence" value="ECO:0007669"/>
    <property type="project" value="UniProtKB-KW"/>
</dbReference>
<dbReference type="GO" id="GO:0045892">
    <property type="term" value="P:negative regulation of DNA-templated transcription"/>
    <property type="evidence" value="ECO:0000314"/>
    <property type="project" value="TAIR"/>
</dbReference>
<dbReference type="GO" id="GO:1902455">
    <property type="term" value="P:negative regulation of stem cell population maintenance"/>
    <property type="evidence" value="ECO:0000315"/>
    <property type="project" value="TAIR"/>
</dbReference>
<dbReference type="InterPro" id="IPR045174">
    <property type="entry name" value="Dof"/>
</dbReference>
<dbReference type="InterPro" id="IPR003851">
    <property type="entry name" value="Znf_Dof"/>
</dbReference>
<dbReference type="PANTHER" id="PTHR31089">
    <property type="entry name" value="CYCLIC DOF FACTOR 2"/>
    <property type="match status" value="1"/>
</dbReference>
<dbReference type="PANTHER" id="PTHR31089:SF22">
    <property type="entry name" value="CYCLIC DOF FACTOR 4"/>
    <property type="match status" value="1"/>
</dbReference>
<dbReference type="Pfam" id="PF02701">
    <property type="entry name" value="Zn_ribbon_Dof"/>
    <property type="match status" value="1"/>
</dbReference>
<dbReference type="PROSITE" id="PS01361">
    <property type="entry name" value="ZF_DOF_1"/>
    <property type="match status" value="1"/>
</dbReference>
<dbReference type="PROSITE" id="PS50884">
    <property type="entry name" value="ZF_DOF_2"/>
    <property type="match status" value="1"/>
</dbReference>
<proteinExistence type="evidence at transcript level"/>
<comment type="function">
    <text evidence="1 4">Transcription factor that binds specifically to a 5'-AA[AG]G-3' consensus core sequence (By similarity). Transcriptional repressor of 'CONSTANS' expression (By similarity). Regulates a photoperiodic flowering response.</text>
</comment>
<comment type="subcellular location">
    <subcellularLocation>
        <location evidence="5">Nucleus</location>
    </subcellularLocation>
</comment>
<comment type="tissue specificity">
    <text evidence="4">Expressed in the vasculature of cotyledons and hypocotyls, leaves and roots.</text>
</comment>
<comment type="induction">
    <text evidence="4">Circadian-regulation. The transcript level rises progressively from dawn and decreases during the night.</text>
</comment>
<organism>
    <name type="scientific">Arabidopsis thaliana</name>
    <name type="common">Mouse-ear cress</name>
    <dbReference type="NCBI Taxonomy" id="3702"/>
    <lineage>
        <taxon>Eukaryota</taxon>
        <taxon>Viridiplantae</taxon>
        <taxon>Streptophyta</taxon>
        <taxon>Embryophyta</taxon>
        <taxon>Tracheophyta</taxon>
        <taxon>Spermatophyta</taxon>
        <taxon>Magnoliopsida</taxon>
        <taxon>eudicotyledons</taxon>
        <taxon>Gunneridae</taxon>
        <taxon>Pentapetalae</taxon>
        <taxon>rosids</taxon>
        <taxon>malvids</taxon>
        <taxon>Brassicales</taxon>
        <taxon>Brassicaceae</taxon>
        <taxon>Camelineae</taxon>
        <taxon>Arabidopsis</taxon>
    </lineage>
</organism>
<name>CDF4_ARATH</name>
<reference key="1">
    <citation type="journal article" date="1999" name="Nature">
        <title>Sequence and analysis of chromosome 2 of the plant Arabidopsis thaliana.</title>
        <authorList>
            <person name="Lin X."/>
            <person name="Kaul S."/>
            <person name="Rounsley S.D."/>
            <person name="Shea T.P."/>
            <person name="Benito M.-I."/>
            <person name="Town C.D."/>
            <person name="Fujii C.Y."/>
            <person name="Mason T.M."/>
            <person name="Bowman C.L."/>
            <person name="Barnstead M.E."/>
            <person name="Feldblyum T.V."/>
            <person name="Buell C.R."/>
            <person name="Ketchum K.A."/>
            <person name="Lee J.J."/>
            <person name="Ronning C.M."/>
            <person name="Koo H.L."/>
            <person name="Moffat K.S."/>
            <person name="Cronin L.A."/>
            <person name="Shen M."/>
            <person name="Pai G."/>
            <person name="Van Aken S."/>
            <person name="Umayam L."/>
            <person name="Tallon L.J."/>
            <person name="Gill J.E."/>
            <person name="Adams M.D."/>
            <person name="Carrera A.J."/>
            <person name="Creasy T.H."/>
            <person name="Goodman H.M."/>
            <person name="Somerville C.R."/>
            <person name="Copenhaver G.P."/>
            <person name="Preuss D."/>
            <person name="Nierman W.C."/>
            <person name="White O."/>
            <person name="Eisen J.A."/>
            <person name="Salzberg S.L."/>
            <person name="Fraser C.M."/>
            <person name="Venter J.C."/>
        </authorList>
    </citation>
    <scope>NUCLEOTIDE SEQUENCE [LARGE SCALE GENOMIC DNA]</scope>
    <source>
        <strain>cv. Columbia</strain>
    </source>
</reference>
<reference key="2">
    <citation type="journal article" date="2017" name="Plant J.">
        <title>Araport11: a complete reannotation of the Arabidopsis thaliana reference genome.</title>
        <authorList>
            <person name="Cheng C.Y."/>
            <person name="Krishnakumar V."/>
            <person name="Chan A.P."/>
            <person name="Thibaud-Nissen F."/>
            <person name="Schobel S."/>
            <person name="Town C.D."/>
        </authorList>
    </citation>
    <scope>GENOME REANNOTATION</scope>
    <source>
        <strain>cv. Columbia</strain>
    </source>
</reference>
<reference key="3">
    <citation type="journal article" date="2003" name="Science">
        <title>Empirical analysis of transcriptional activity in the Arabidopsis genome.</title>
        <authorList>
            <person name="Yamada K."/>
            <person name="Lim J."/>
            <person name="Dale J.M."/>
            <person name="Chen H."/>
            <person name="Shinn P."/>
            <person name="Palm C.J."/>
            <person name="Southwick A.M."/>
            <person name="Wu H.C."/>
            <person name="Kim C.J."/>
            <person name="Nguyen M."/>
            <person name="Pham P.K."/>
            <person name="Cheuk R.F."/>
            <person name="Karlin-Newmann G."/>
            <person name="Liu S.X."/>
            <person name="Lam B."/>
            <person name="Sakano H."/>
            <person name="Wu T."/>
            <person name="Yu G."/>
            <person name="Miranda M."/>
            <person name="Quach H.L."/>
            <person name="Tripp M."/>
            <person name="Chang C.H."/>
            <person name="Lee J.M."/>
            <person name="Toriumi M.J."/>
            <person name="Chan M.M."/>
            <person name="Tang C.C."/>
            <person name="Onodera C.S."/>
            <person name="Deng J.M."/>
            <person name="Akiyama K."/>
            <person name="Ansari Y."/>
            <person name="Arakawa T."/>
            <person name="Banh J."/>
            <person name="Banno F."/>
            <person name="Bowser L."/>
            <person name="Brooks S.Y."/>
            <person name="Carninci P."/>
            <person name="Chao Q."/>
            <person name="Choy N."/>
            <person name="Enju A."/>
            <person name="Goldsmith A.D."/>
            <person name="Gurjal M."/>
            <person name="Hansen N.F."/>
            <person name="Hayashizaki Y."/>
            <person name="Johnson-Hopson C."/>
            <person name="Hsuan V.W."/>
            <person name="Iida K."/>
            <person name="Karnes M."/>
            <person name="Khan S."/>
            <person name="Koesema E."/>
            <person name="Ishida J."/>
            <person name="Jiang P.X."/>
            <person name="Jones T."/>
            <person name="Kawai J."/>
            <person name="Kamiya A."/>
            <person name="Meyers C."/>
            <person name="Nakajima M."/>
            <person name="Narusaka M."/>
            <person name="Seki M."/>
            <person name="Sakurai T."/>
            <person name="Satou M."/>
            <person name="Tamse R."/>
            <person name="Vaysberg M."/>
            <person name="Wallender E.K."/>
            <person name="Wong C."/>
            <person name="Yamamura Y."/>
            <person name="Yuan S."/>
            <person name="Shinozaki K."/>
            <person name="Davis R.W."/>
            <person name="Theologis A."/>
            <person name="Ecker J.R."/>
        </authorList>
    </citation>
    <scope>NUCLEOTIDE SEQUENCE [LARGE SCALE MRNA]</scope>
    <source>
        <strain>cv. Columbia</strain>
    </source>
</reference>
<reference key="4">
    <citation type="submission" date="2005-03" db="EMBL/GenBank/DDBJ databases">
        <title>Large-scale analysis of RIKEN Arabidopsis full-length (RAFL) cDNAs.</title>
        <authorList>
            <person name="Totoki Y."/>
            <person name="Seki M."/>
            <person name="Ishida J."/>
            <person name="Nakajima M."/>
            <person name="Enju A."/>
            <person name="Kamiya A."/>
            <person name="Narusaka M."/>
            <person name="Shin-i T."/>
            <person name="Nakagawa M."/>
            <person name="Sakamoto N."/>
            <person name="Oishi K."/>
            <person name="Kohara Y."/>
            <person name="Kobayashi M."/>
            <person name="Toyoda A."/>
            <person name="Sakaki Y."/>
            <person name="Sakurai T."/>
            <person name="Iida K."/>
            <person name="Akiyama K."/>
            <person name="Satou M."/>
            <person name="Toyoda T."/>
            <person name="Konagaya A."/>
            <person name="Carninci P."/>
            <person name="Kawai J."/>
            <person name="Hayashizaki Y."/>
            <person name="Shinozaki K."/>
        </authorList>
    </citation>
    <scope>NUCLEOTIDE SEQUENCE [LARGE SCALE MRNA]</scope>
</reference>
<reference key="5">
    <citation type="journal article" date="2002" name="Trends Plant Sci.">
        <title>The Dof family of plant transcription factors.</title>
        <authorList>
            <person name="Yanagisawa S."/>
        </authorList>
    </citation>
    <scope>GENE FAMILY</scope>
    <scope>NOMENCLATURE</scope>
</reference>
<reference key="6">
    <citation type="journal article" date="2009" name="Dev. Cell">
        <title>Arabidopsis DOF transcription factors act redundantly to reduce CONSTANS expression and are essential for a photoperiodic flowering response.</title>
        <authorList>
            <person name="Fornara F."/>
            <person name="Panigrahi K.C."/>
            <person name="Gissot L."/>
            <person name="Sauerbrunn N."/>
            <person name="Ruehl M."/>
            <person name="Jarillo J.A."/>
            <person name="Coupland G."/>
        </authorList>
    </citation>
    <scope>FUNCTION</scope>
    <scope>TISSUE SPECIFICITY</scope>
    <scope>INDUCTION</scope>
</reference>
<feature type="chain" id="PRO_0000074274" description="Cyclic dof factor 4">
    <location>
        <begin position="1"/>
        <end position="170"/>
    </location>
</feature>
<feature type="zinc finger region" description="Dof-type" evidence="2">
    <location>
        <begin position="58"/>
        <end position="112"/>
    </location>
</feature>
<feature type="region of interest" description="Disordered" evidence="3">
    <location>
        <begin position="25"/>
        <end position="51"/>
    </location>
</feature>
<feature type="binding site" evidence="2">
    <location>
        <position position="60"/>
    </location>
    <ligand>
        <name>Zn(2+)</name>
        <dbReference type="ChEBI" id="CHEBI:29105"/>
    </ligand>
</feature>
<feature type="binding site" evidence="2">
    <location>
        <position position="63"/>
    </location>
    <ligand>
        <name>Zn(2+)</name>
        <dbReference type="ChEBI" id="CHEBI:29105"/>
    </ligand>
</feature>
<feature type="binding site" evidence="2">
    <location>
        <position position="85"/>
    </location>
    <ligand>
        <name>Zn(2+)</name>
        <dbReference type="ChEBI" id="CHEBI:29105"/>
    </ligand>
</feature>
<feature type="binding site" evidence="2">
    <location>
        <position position="88"/>
    </location>
    <ligand>
        <name>Zn(2+)</name>
        <dbReference type="ChEBI" id="CHEBI:29105"/>
    </ligand>
</feature>
<sequence length="170" mass="18927">MATQDSQGIKLFGKTIAFNTRTIKNEEETHPPEQEATIAVRSSSSSDLTAEKRPDKIIACPRCKSMETKFCYFNNYNVNQPRHFCKGCHRYWTAGGALRNVPVGAGRRKSKPPGRVVVGMLGDGNGVRQVELINGLLVEEWQHAAAAAHGSFRHDFPMKRLRCYSDGQSC</sequence>